<accession>F4J7T3</accession>
<accession>Q9LRX3</accession>
<evidence type="ECO:0000255" key="1">
    <source>
        <dbReference type="PROSITE-ProRule" id="PRU00549"/>
    </source>
</evidence>
<evidence type="ECO:0000256" key="2">
    <source>
        <dbReference type="SAM" id="MobiDB-lite"/>
    </source>
</evidence>
<evidence type="ECO:0000269" key="3">
    <source ref="3"/>
</evidence>
<evidence type="ECO:0000305" key="4"/>
<evidence type="ECO:0000312" key="5">
    <source>
        <dbReference type="Araport" id="AT3G24880"/>
    </source>
</evidence>
<evidence type="ECO:0000312" key="6">
    <source>
        <dbReference type="EMBL" id="BAB02898.1"/>
    </source>
</evidence>
<evidence type="ECO:0000312" key="7">
    <source>
        <dbReference type="Proteomes" id="UP000006548"/>
    </source>
</evidence>
<gene>
    <name type="primary">EAF1A</name>
    <name evidence="5" type="ordered locus">At3g24880</name>
    <name evidence="6" type="ORF">K7P8.17</name>
</gene>
<reference key="1">
    <citation type="journal article" date="2000" name="DNA Res.">
        <title>Structural analysis of Arabidopsis thaliana chromosome 3. I. Sequence features of the regions of 4,504,864 bp covered by sixty P1 and TAC clones.</title>
        <authorList>
            <person name="Sato S."/>
            <person name="Nakamura Y."/>
            <person name="Kaneko T."/>
            <person name="Katoh T."/>
            <person name="Asamizu E."/>
            <person name="Tabata S."/>
        </authorList>
    </citation>
    <scope>NUCLEOTIDE SEQUENCE [LARGE SCALE GENOMIC DNA]</scope>
    <source>
        <strain>cv. Columbia</strain>
    </source>
</reference>
<reference key="2">
    <citation type="journal article" date="2017" name="Plant J.">
        <title>Araport11: a complete reannotation of the Arabidopsis thaliana reference genome.</title>
        <authorList>
            <person name="Cheng C.Y."/>
            <person name="Krishnakumar V."/>
            <person name="Chan A.P."/>
            <person name="Thibaud-Nissen F."/>
            <person name="Schobel S."/>
            <person name="Town C.D."/>
        </authorList>
    </citation>
    <scope>GENOME REANNOTATION</scope>
    <source>
        <strain>cv. Columbia</strain>
    </source>
</reference>
<reference key="3">
    <citation type="journal article" date="2015" name="BMC Plant Biol.">
        <title>AtEAF1 is a potential platform protein for Arabidopsis NuA4 acetyltransferase complex.</title>
        <authorList>
            <person name="Bieluszewski T."/>
            <person name="Galganski L."/>
            <person name="Sura W."/>
            <person name="Bieluszewska A."/>
            <person name="Abram M."/>
            <person name="Ludwikow A."/>
            <person name="Ziolkowski P."/>
            <person name="Sadowski J."/>
        </authorList>
    </citation>
    <scope>FUNCTION</scope>
    <scope>IDENTIFICATION IN THE NUA4 COMPLEX</scope>
    <scope>TISSUE SPECIFICITY</scope>
    <scope>INTERACTION WITH TAF14 AND TAF14B</scope>
    <scope>SUBCELLULAR LOCATION</scope>
</reference>
<proteinExistence type="evidence at protein level"/>
<feature type="chain" id="PRO_0000432986" description="Chromatin modification-related protein EAF1 A">
    <location>
        <begin position="1"/>
        <end position="1957"/>
    </location>
</feature>
<feature type="domain" description="HSA" evidence="1">
    <location>
        <begin position="563"/>
        <end position="641"/>
    </location>
</feature>
<feature type="domain" description="SANT">
    <location>
        <begin position="1049"/>
        <end position="1105"/>
    </location>
</feature>
<feature type="region of interest" description="Disordered" evidence="2">
    <location>
        <begin position="108"/>
        <end position="208"/>
    </location>
</feature>
<feature type="region of interest" description="Disordered" evidence="2">
    <location>
        <begin position="261"/>
        <end position="287"/>
    </location>
</feature>
<feature type="region of interest" description="Disordered" evidence="2">
    <location>
        <begin position="323"/>
        <end position="373"/>
    </location>
</feature>
<feature type="region of interest" description="Disordered" evidence="2">
    <location>
        <begin position="449"/>
        <end position="469"/>
    </location>
</feature>
<feature type="region of interest" description="Disordered" evidence="2">
    <location>
        <begin position="833"/>
        <end position="909"/>
    </location>
</feature>
<feature type="region of interest" description="Disordered" evidence="2">
    <location>
        <begin position="928"/>
        <end position="950"/>
    </location>
</feature>
<feature type="region of interest" description="Disordered" evidence="2">
    <location>
        <begin position="1107"/>
        <end position="1131"/>
    </location>
</feature>
<feature type="region of interest" description="Disordered" evidence="2">
    <location>
        <begin position="1282"/>
        <end position="1314"/>
    </location>
</feature>
<feature type="region of interest" description="Disordered" evidence="2">
    <location>
        <begin position="1344"/>
        <end position="1367"/>
    </location>
</feature>
<feature type="region of interest" description="Disordered" evidence="2">
    <location>
        <begin position="1449"/>
        <end position="1644"/>
    </location>
</feature>
<feature type="region of interest" description="Disordered" evidence="2">
    <location>
        <begin position="1687"/>
        <end position="1768"/>
    </location>
</feature>
<feature type="region of interest" description="Disordered" evidence="2">
    <location>
        <begin position="1804"/>
        <end position="1840"/>
    </location>
</feature>
<feature type="region of interest" description="Disordered" evidence="2">
    <location>
        <begin position="1876"/>
        <end position="1957"/>
    </location>
</feature>
<feature type="compositionally biased region" description="Basic and acidic residues" evidence="2">
    <location>
        <begin position="140"/>
        <end position="151"/>
    </location>
</feature>
<feature type="compositionally biased region" description="Polar residues" evidence="2">
    <location>
        <begin position="261"/>
        <end position="270"/>
    </location>
</feature>
<feature type="compositionally biased region" description="Polar residues" evidence="2">
    <location>
        <begin position="333"/>
        <end position="342"/>
    </location>
</feature>
<feature type="compositionally biased region" description="Polar residues" evidence="2">
    <location>
        <begin position="355"/>
        <end position="372"/>
    </location>
</feature>
<feature type="compositionally biased region" description="Polar residues" evidence="2">
    <location>
        <begin position="884"/>
        <end position="898"/>
    </location>
</feature>
<feature type="compositionally biased region" description="Polar residues" evidence="2">
    <location>
        <begin position="1116"/>
        <end position="1125"/>
    </location>
</feature>
<feature type="compositionally biased region" description="Polar residues" evidence="2">
    <location>
        <begin position="1290"/>
        <end position="1314"/>
    </location>
</feature>
<feature type="compositionally biased region" description="Polar residues" evidence="2">
    <location>
        <begin position="1344"/>
        <end position="1358"/>
    </location>
</feature>
<feature type="compositionally biased region" description="Polar residues" evidence="2">
    <location>
        <begin position="1459"/>
        <end position="1472"/>
    </location>
</feature>
<feature type="compositionally biased region" description="Polar residues" evidence="2">
    <location>
        <begin position="1479"/>
        <end position="1492"/>
    </location>
</feature>
<feature type="compositionally biased region" description="Polar residues" evidence="2">
    <location>
        <begin position="1501"/>
        <end position="1510"/>
    </location>
</feature>
<feature type="compositionally biased region" description="Low complexity" evidence="2">
    <location>
        <begin position="1523"/>
        <end position="1534"/>
    </location>
</feature>
<feature type="compositionally biased region" description="Low complexity" evidence="2">
    <location>
        <begin position="1545"/>
        <end position="1562"/>
    </location>
</feature>
<feature type="compositionally biased region" description="Pro residues" evidence="2">
    <location>
        <begin position="1563"/>
        <end position="1579"/>
    </location>
</feature>
<feature type="compositionally biased region" description="Polar residues" evidence="2">
    <location>
        <begin position="1582"/>
        <end position="1595"/>
    </location>
</feature>
<feature type="compositionally biased region" description="Polar residues" evidence="2">
    <location>
        <begin position="1604"/>
        <end position="1618"/>
    </location>
</feature>
<feature type="compositionally biased region" description="Polar residues" evidence="2">
    <location>
        <begin position="1635"/>
        <end position="1644"/>
    </location>
</feature>
<feature type="compositionally biased region" description="Polar residues" evidence="2">
    <location>
        <begin position="1691"/>
        <end position="1722"/>
    </location>
</feature>
<feature type="compositionally biased region" description="Polar residues" evidence="2">
    <location>
        <begin position="1734"/>
        <end position="1758"/>
    </location>
</feature>
<feature type="compositionally biased region" description="Low complexity" evidence="2">
    <location>
        <begin position="1759"/>
        <end position="1768"/>
    </location>
</feature>
<feature type="compositionally biased region" description="Basic and acidic residues" evidence="2">
    <location>
        <begin position="1805"/>
        <end position="1815"/>
    </location>
</feature>
<feature type="compositionally biased region" description="Polar residues" evidence="2">
    <location>
        <begin position="1819"/>
        <end position="1832"/>
    </location>
</feature>
<feature type="compositionally biased region" description="Polar residues" evidence="2">
    <location>
        <begin position="1876"/>
        <end position="1894"/>
    </location>
</feature>
<feature type="compositionally biased region" description="Basic and acidic residues" evidence="2">
    <location>
        <begin position="1913"/>
        <end position="1922"/>
    </location>
</feature>
<feature type="compositionally biased region" description="Basic and acidic residues" evidence="2">
    <location>
        <begin position="1932"/>
        <end position="1942"/>
    </location>
</feature>
<organism evidence="7">
    <name type="scientific">Arabidopsis thaliana</name>
    <name type="common">Mouse-ear cress</name>
    <dbReference type="NCBI Taxonomy" id="3702"/>
    <lineage>
        <taxon>Eukaryota</taxon>
        <taxon>Viridiplantae</taxon>
        <taxon>Streptophyta</taxon>
        <taxon>Embryophyta</taxon>
        <taxon>Tracheophyta</taxon>
        <taxon>Spermatophyta</taxon>
        <taxon>Magnoliopsida</taxon>
        <taxon>eudicotyledons</taxon>
        <taxon>Gunneridae</taxon>
        <taxon>Pentapetalae</taxon>
        <taxon>rosids</taxon>
        <taxon>malvids</taxon>
        <taxon>Brassicales</taxon>
        <taxon>Brassicaceae</taxon>
        <taxon>Camelineae</taxon>
        <taxon>Arabidopsis</taxon>
    </lineage>
</organism>
<name>EAF1A_ARATH</name>
<comment type="function">
    <text evidence="3">Component of the NuA4 histone acetyltransferase complex which is involved in transcriptional activation of selected genes principally by acetylation of nucleosomal histone H4 and H2A.</text>
</comment>
<comment type="subunit">
    <text evidence="3">Component of the NuA4 histone acetyltransferase complex. Interacts with ARP4 and SWC4, and (via HSA domain) with TAF14 and TAF14B.</text>
</comment>
<comment type="subcellular location">
    <subcellularLocation>
        <location evidence="3">Nucleus</location>
    </subcellularLocation>
</comment>
<comment type="tissue specificity">
    <text evidence="3">Expressed in leaves.</text>
</comment>
<comment type="miscellaneous">
    <text evidence="3">Decreased expression of EAF1A leads to decreased levels of H4K5 acetylation in the promoter region of major flowering regulator genes, decreased FLC expression and early flowering.</text>
</comment>
<comment type="similarity">
    <text evidence="4">Belongs to the EAF1 family.</text>
</comment>
<comment type="sequence caution" evidence="4">
    <conflict type="erroneous gene model prediction">
        <sequence resource="EMBL-CDS" id="BAB02898"/>
    </conflict>
</comment>
<dbReference type="EMBL" id="AB028609">
    <property type="protein sequence ID" value="BAB02898.1"/>
    <property type="status" value="ALT_SEQ"/>
    <property type="molecule type" value="Genomic_DNA"/>
</dbReference>
<dbReference type="EMBL" id="CP002686">
    <property type="protein sequence ID" value="AEE76957.1"/>
    <property type="molecule type" value="Genomic_DNA"/>
</dbReference>
<dbReference type="RefSeq" id="NP_189132.2">
    <property type="nucleotide sequence ID" value="NM_113400.4"/>
</dbReference>
<dbReference type="SMR" id="F4J7T3"/>
<dbReference type="FunCoup" id="F4J7T3">
    <property type="interactions" value="431"/>
</dbReference>
<dbReference type="STRING" id="3702.F4J7T3"/>
<dbReference type="GlyGen" id="F4J7T3">
    <property type="glycosylation" value="3 sites"/>
</dbReference>
<dbReference type="iPTMnet" id="F4J7T3"/>
<dbReference type="MetOSite" id="F4J7T3"/>
<dbReference type="PaxDb" id="3702-AT3G24880.1"/>
<dbReference type="ProteomicsDB" id="221959"/>
<dbReference type="EnsemblPlants" id="AT3G24880.1">
    <property type="protein sequence ID" value="AT3G24880.1"/>
    <property type="gene ID" value="AT3G24880"/>
</dbReference>
<dbReference type="GeneID" id="822086"/>
<dbReference type="Gramene" id="AT3G24880.1">
    <property type="protein sequence ID" value="AT3G24880.1"/>
    <property type="gene ID" value="AT3G24880"/>
</dbReference>
<dbReference type="KEGG" id="ath:AT3G24880"/>
<dbReference type="Araport" id="AT3G24880"/>
<dbReference type="TAIR" id="AT3G24880">
    <property type="gene designation" value="ATEAF1A"/>
</dbReference>
<dbReference type="eggNOG" id="ENOG502S9E7">
    <property type="taxonomic scope" value="Eukaryota"/>
</dbReference>
<dbReference type="HOGENOM" id="CLU_002111_0_0_1"/>
<dbReference type="InParanoid" id="F4J7T3"/>
<dbReference type="PRO" id="PR:F4J7T3"/>
<dbReference type="Proteomes" id="UP000006548">
    <property type="component" value="Chromosome 3"/>
</dbReference>
<dbReference type="ExpressionAtlas" id="F4J7T3">
    <property type="expression patterns" value="baseline and differential"/>
</dbReference>
<dbReference type="GO" id="GO:0035267">
    <property type="term" value="C:NuA4 histone acetyltransferase complex"/>
    <property type="evidence" value="ECO:0000314"/>
    <property type="project" value="UniProtKB"/>
</dbReference>
<dbReference type="GO" id="GO:0005634">
    <property type="term" value="C:nucleus"/>
    <property type="evidence" value="ECO:0000314"/>
    <property type="project" value="UniProtKB"/>
</dbReference>
<dbReference type="GO" id="GO:0003677">
    <property type="term" value="F:DNA binding"/>
    <property type="evidence" value="ECO:0007669"/>
    <property type="project" value="UniProtKB-KW"/>
</dbReference>
<dbReference type="GO" id="GO:0006325">
    <property type="term" value="P:chromatin organization"/>
    <property type="evidence" value="ECO:0007669"/>
    <property type="project" value="UniProtKB-KW"/>
</dbReference>
<dbReference type="GO" id="GO:0009909">
    <property type="term" value="P:regulation of flower development"/>
    <property type="evidence" value="ECO:0000315"/>
    <property type="project" value="UniProtKB"/>
</dbReference>
<dbReference type="GO" id="GO:0048510">
    <property type="term" value="P:regulation of timing of transition from vegetative to reproductive phase"/>
    <property type="evidence" value="ECO:0000315"/>
    <property type="project" value="UniProtKB"/>
</dbReference>
<dbReference type="CDD" id="cd00167">
    <property type="entry name" value="SANT"/>
    <property type="match status" value="1"/>
</dbReference>
<dbReference type="FunFam" id="1.10.10.60:FF:000578">
    <property type="entry name" value="Helicase/SANT-associated, DNA binding protein"/>
    <property type="match status" value="1"/>
</dbReference>
<dbReference type="Gene3D" id="1.10.10.60">
    <property type="entry name" value="Homeodomain-like"/>
    <property type="match status" value="1"/>
</dbReference>
<dbReference type="InterPro" id="IPR044798">
    <property type="entry name" value="EAF1A/B"/>
</dbReference>
<dbReference type="InterPro" id="IPR009057">
    <property type="entry name" value="Homeodomain-like_sf"/>
</dbReference>
<dbReference type="InterPro" id="IPR014012">
    <property type="entry name" value="HSA_dom"/>
</dbReference>
<dbReference type="InterPro" id="IPR001005">
    <property type="entry name" value="SANT/Myb"/>
</dbReference>
<dbReference type="PANTHER" id="PTHR46774">
    <property type="entry name" value="CHROMATIN MODIFICATION-RELATED PROTEIN EAF1 A-RELATED"/>
    <property type="match status" value="1"/>
</dbReference>
<dbReference type="PANTHER" id="PTHR46774:SF3">
    <property type="entry name" value="CHROMATIN MODIFICATION-RELATED PROTEIN EAF1 A-RELATED"/>
    <property type="match status" value="1"/>
</dbReference>
<dbReference type="Pfam" id="PF07529">
    <property type="entry name" value="HSA"/>
    <property type="match status" value="1"/>
</dbReference>
<dbReference type="Pfam" id="PF13921">
    <property type="entry name" value="Myb_DNA-bind_6"/>
    <property type="match status" value="1"/>
</dbReference>
<dbReference type="SMART" id="SM00573">
    <property type="entry name" value="HSA"/>
    <property type="match status" value="1"/>
</dbReference>
<dbReference type="SMART" id="SM00717">
    <property type="entry name" value="SANT"/>
    <property type="match status" value="1"/>
</dbReference>
<dbReference type="SUPFAM" id="SSF46689">
    <property type="entry name" value="Homeodomain-like"/>
    <property type="match status" value="1"/>
</dbReference>
<dbReference type="PROSITE" id="PS51204">
    <property type="entry name" value="HSA"/>
    <property type="match status" value="1"/>
</dbReference>
<dbReference type="PROSITE" id="PS50090">
    <property type="entry name" value="MYB_LIKE"/>
    <property type="match status" value="1"/>
</dbReference>
<protein>
    <recommendedName>
        <fullName>Chromatin modification-related protein EAF1 A</fullName>
    </recommendedName>
    <alternativeName>
        <fullName>ESA1-associated factor 1 A</fullName>
    </alternativeName>
</protein>
<keyword id="KW-0156">Chromatin regulator</keyword>
<keyword id="KW-0238">DNA-binding</keyword>
<keyword id="KW-0539">Nucleus</keyword>
<keyword id="KW-1185">Reference proteome</keyword>
<sequence length="1957" mass="211667">MHGSVSGYLLVNAEVDSMGGVIDSGGGIGVKTSPRRTAIEKAQAELRQEYDVREERRRELEFLEKGGNPLDFKFGIATSHSVQSTSLTDQQAEHFVNSEVKDSFALTASPHGDSVESSGRPGVPTISEPNTADNLLLFDSENKSVEGERNLRHPNRQNRTSESERSSKAHTNQNTKETEDSAIFRPYARRNRSKISRDPARSSSTDLVQNRGGLATSISIRRGSVEGKGCIPEAANQKDMHTTSVSCPVFANSNGNIVPKNRVSSNSLNTKVDGEPVVRESTAGSKTSLLKDEADISYSKSSAYLPVGESGLAGEKAQLVSTGGSPKAATIAGQKNSSTQLNGLRDSTVEEESLTNRGATGTNGLESESSHANNVEVNVDNERDLYKVDKLDSDEISMQKTLRVEGLLDQTVGEMTKTKIEDETGQSTTIISECIPECEMQMKSVKIENQSHRSTAEMQTKEKSSETEKRLQDGLVVLENDSKVGSILSENPSSTLCSGIPQASVDTSSCTVGNSLLSGTDIEALKHQPSSDAVMLDTVKEDAILEEARIIQAKKKRIAELSCGTAPVEVREKSQWDFVLEEMAWLANDFAQERLWKMTAAAQICHRVALTCQLRFEERNQHRKLKKIASVLSNAILQFWSSVEAEVPGELEETSLGIVKETCQESNCLNGRRCLAAGVKEYASRFLKYNNSSISYHSAAPSTPDNMCDPEILDISMVDQLTEASLFYSVPSGAMEVYLKSIESHLTRCEKSGSSMQEEVDTSAYDTAGDIGYNVTAFDEDEGETSTYYLPGAFESSRSFNISHKKRKNLMKSHSARSYDLGDDLPYVNNTGGSNSSSLMAKRPDSNINAGSVPTRRVRTASRQRVVSPFGCATTGNLPVPSKTDASSGDTSSFQDEYSSLHGGSAVQKGTEVESSVNFEKLLPYDMAETSGRPKKKKKTHQGSAYDQTWHLDPSVHVEQKDHWKKRPENNFDMNGLYGPHSAKKQKTTKQLVENNFDMAIPHTGSIPSPAASQMSNMSNPNKSIKFIGGRDRGRKIKGLKISPGQHGSGNPWSLFEDQALVVLVHDMGPNWELISDAMNSTLKIKCIYRNPTECKDRHKILMDKTAGDGADSAEDSGNSQSYPSTLPGIPKGSARQLFQRLQGPMEEDTLKSHFEKICLIGKKLHYRKTQSVIGVSVVSFVHGIQFSSCTGAGISQSLDIPGLHVSKYSCKSWLGFPENDGRDSKQIVPVHNSQVMALSQVFPNNLNGGVLTPLDVCDASTSGQDVFSLENPGLPMLNQGTPVLPTSGAHPSTPGSSGVVLSNNLPTTSGLQSASVRDGRFNVPRGSLPLDEQHRLQQFNQTLSGRNLQQPSLSTPAAVSGSDRGHRMVPGGNAMGVSGMNRNTPMSRPGFQGMASSAMPNTGSMLSSGMVEIPNTGNIHSGGGASQGNSMIRPREAVQHMMRMQAAQGNSPGIPAFSNLSSGFTNQTTPVQAYPGHLSQQHQMSPQSHVLGNSHHPHLQSPSQATGAQQEAFAIRQRQIHQRYLQQQQQQQQFPASGSMMPHVQQPQGSSVSSSPQNSPQTQPPVSPQPLSMPPVSPSPNINAMAQQKPQKSQLALHGLGRSPQSGTSGVNNQAGKQRQRQLQQSARQHPHQRQPTQGQQLNKQLKGMGRGNMIHQNITVDQSHLNGLTMPQGNQATEKGEIAVPVRPDQQSSVGTTTSTNLQSKPFVSPLSSNHSQQLPKSFPGALPPSPQQQMQLHSDNSIQGQSSPATPCNILSTSSPSIAPAVAPSNHQHLLIHQKQRNQVQSTAQRVVQHNHLGNSELSKKSQAERMPRVPQSVTNTTQTVSMGTTKGMPQASNDLKNIKAVGSTAVPALEPPSCVASVQITASKVVNSSNTDSAGNDPVSTPNQGLAQKHGIKGVTQRQQQSLPSEEKRPKLPEKPTVQNQKHLASEEQPHLEEAQELSSSKPPDTKVE</sequence>